<protein>
    <recommendedName>
        <fullName>ATP-dependent RNA helicase DBP5</fullName>
        <ecNumber>3.6.4.13</ecNumber>
    </recommendedName>
</protein>
<organism>
    <name type="scientific">Ajellomyces capsulatus (strain NAm1 / WU24)</name>
    <name type="common">Darling's disease fungus</name>
    <name type="synonym">Histoplasma capsulatum</name>
    <dbReference type="NCBI Taxonomy" id="2059318"/>
    <lineage>
        <taxon>Eukaryota</taxon>
        <taxon>Fungi</taxon>
        <taxon>Dikarya</taxon>
        <taxon>Ascomycota</taxon>
        <taxon>Pezizomycotina</taxon>
        <taxon>Eurotiomycetes</taxon>
        <taxon>Eurotiomycetidae</taxon>
        <taxon>Onygenales</taxon>
        <taxon>Ajellomycetaceae</taxon>
        <taxon>Histoplasma</taxon>
    </lineage>
</organism>
<sequence>MATETPAGGPLEARISRAEPKTDASATSEPATGDTTETPAATKPSAADGQTDGASEGFGGSQLQEPEYSVNVKLSDLQADPNNPLYSIKSFEELGLHPSILQGLHSMSFRRPSKIQEKALPLLLNNPPANMIGQSQSGTGKTAAFVLNILSRLDLSPQMELAPQALVLAPSRELARQIVGVIQVMGSYVDKLKVATAVPMESNRNQKVEAPVVVGTPGTVMDLIRKRLFNPQHLKVIVLDEADNMLDQQGLGDQCIRVKGLLPKNIQVVLFSATFPDHVVRYANKFAPNANQITLKHEELTVEGIKQLYLDCDSDEHKFDILVKFYGLLTIGSSIIFVKTRASAVEIERRMVAEGHTVVSLTGGVEGQKRDEIIDKFRQGDAKVLITTNVLARGIDVQTVSMVINYDIPELHAPKATKRIADAQTYLHRIGRTGRFGRVGVAVSFVASKEEWQMLQDIKTYFNTEIQRVNTQDWDEVEEVVKTIIRSSRAGSNFQRS</sequence>
<dbReference type="EC" id="3.6.4.13"/>
<dbReference type="EMBL" id="CH476662">
    <property type="protein sequence ID" value="EDN10747.1"/>
    <property type="molecule type" value="Genomic_DNA"/>
</dbReference>
<dbReference type="SMR" id="A6RC50"/>
<dbReference type="STRING" id="339724.A6RC50"/>
<dbReference type="KEGG" id="aje:HCAG_07208"/>
<dbReference type="VEuPathDB" id="FungiDB:HCAG_07208"/>
<dbReference type="HOGENOM" id="CLU_003041_1_0_1"/>
<dbReference type="OMA" id="IAAETRW"/>
<dbReference type="OrthoDB" id="2906at299071"/>
<dbReference type="Proteomes" id="UP000009297">
    <property type="component" value="Unassembled WGS sequence"/>
</dbReference>
<dbReference type="GO" id="GO:0005737">
    <property type="term" value="C:cytoplasm"/>
    <property type="evidence" value="ECO:0007669"/>
    <property type="project" value="UniProtKB-SubCell"/>
</dbReference>
<dbReference type="GO" id="GO:0031965">
    <property type="term" value="C:nuclear membrane"/>
    <property type="evidence" value="ECO:0007669"/>
    <property type="project" value="UniProtKB-SubCell"/>
</dbReference>
<dbReference type="GO" id="GO:0005643">
    <property type="term" value="C:nuclear pore"/>
    <property type="evidence" value="ECO:0007669"/>
    <property type="project" value="UniProtKB-SubCell"/>
</dbReference>
<dbReference type="GO" id="GO:0005524">
    <property type="term" value="F:ATP binding"/>
    <property type="evidence" value="ECO:0007669"/>
    <property type="project" value="UniProtKB-KW"/>
</dbReference>
<dbReference type="GO" id="GO:0016887">
    <property type="term" value="F:ATP hydrolysis activity"/>
    <property type="evidence" value="ECO:0007669"/>
    <property type="project" value="RHEA"/>
</dbReference>
<dbReference type="GO" id="GO:0003723">
    <property type="term" value="F:RNA binding"/>
    <property type="evidence" value="ECO:0007669"/>
    <property type="project" value="UniProtKB-KW"/>
</dbReference>
<dbReference type="GO" id="GO:0003724">
    <property type="term" value="F:RNA helicase activity"/>
    <property type="evidence" value="ECO:0007669"/>
    <property type="project" value="UniProtKB-EC"/>
</dbReference>
<dbReference type="GO" id="GO:0051028">
    <property type="term" value="P:mRNA transport"/>
    <property type="evidence" value="ECO:0007669"/>
    <property type="project" value="UniProtKB-KW"/>
</dbReference>
<dbReference type="GO" id="GO:0015031">
    <property type="term" value="P:protein transport"/>
    <property type="evidence" value="ECO:0007669"/>
    <property type="project" value="UniProtKB-KW"/>
</dbReference>
<dbReference type="CDD" id="cd17963">
    <property type="entry name" value="DEADc_DDX19_DDX25"/>
    <property type="match status" value="1"/>
</dbReference>
<dbReference type="CDD" id="cd18787">
    <property type="entry name" value="SF2_C_DEAD"/>
    <property type="match status" value="1"/>
</dbReference>
<dbReference type="FunFam" id="3.40.50.300:FF:000849">
    <property type="entry name" value="ATP-dependent RNA helicase DBP5"/>
    <property type="match status" value="1"/>
</dbReference>
<dbReference type="Gene3D" id="3.40.50.300">
    <property type="entry name" value="P-loop containing nucleotide triphosphate hydrolases"/>
    <property type="match status" value="2"/>
</dbReference>
<dbReference type="InterPro" id="IPR011545">
    <property type="entry name" value="DEAD/DEAH_box_helicase_dom"/>
</dbReference>
<dbReference type="InterPro" id="IPR014001">
    <property type="entry name" value="Helicase_ATP-bd"/>
</dbReference>
<dbReference type="InterPro" id="IPR001650">
    <property type="entry name" value="Helicase_C-like"/>
</dbReference>
<dbReference type="InterPro" id="IPR027417">
    <property type="entry name" value="P-loop_NTPase"/>
</dbReference>
<dbReference type="InterPro" id="IPR000629">
    <property type="entry name" value="RNA-helicase_DEAD-box_CS"/>
</dbReference>
<dbReference type="InterPro" id="IPR014014">
    <property type="entry name" value="RNA_helicase_DEAD_Q_motif"/>
</dbReference>
<dbReference type="PANTHER" id="PTHR47958">
    <property type="entry name" value="ATP-DEPENDENT RNA HELICASE DBP3"/>
    <property type="match status" value="1"/>
</dbReference>
<dbReference type="Pfam" id="PF00270">
    <property type="entry name" value="DEAD"/>
    <property type="match status" value="1"/>
</dbReference>
<dbReference type="Pfam" id="PF00271">
    <property type="entry name" value="Helicase_C"/>
    <property type="match status" value="1"/>
</dbReference>
<dbReference type="SMART" id="SM00487">
    <property type="entry name" value="DEXDc"/>
    <property type="match status" value="1"/>
</dbReference>
<dbReference type="SMART" id="SM00490">
    <property type="entry name" value="HELICc"/>
    <property type="match status" value="1"/>
</dbReference>
<dbReference type="SUPFAM" id="SSF52540">
    <property type="entry name" value="P-loop containing nucleoside triphosphate hydrolases"/>
    <property type="match status" value="1"/>
</dbReference>
<dbReference type="PROSITE" id="PS00039">
    <property type="entry name" value="DEAD_ATP_HELICASE"/>
    <property type="match status" value="1"/>
</dbReference>
<dbReference type="PROSITE" id="PS51192">
    <property type="entry name" value="HELICASE_ATP_BIND_1"/>
    <property type="match status" value="1"/>
</dbReference>
<dbReference type="PROSITE" id="PS51194">
    <property type="entry name" value="HELICASE_CTER"/>
    <property type="match status" value="1"/>
</dbReference>
<dbReference type="PROSITE" id="PS51195">
    <property type="entry name" value="Q_MOTIF"/>
    <property type="match status" value="1"/>
</dbReference>
<comment type="function">
    <text evidence="1">ATP-dependent RNA helicase associated with the nuclear pore complex and essential for mRNA export from the nucleus. May participate in a terminal step of mRNA export through the removal of proteins that accompany mRNA through the nucleopore complex. May also be involved in early transcription (By similarity).</text>
</comment>
<comment type="catalytic activity">
    <reaction>
        <text>ATP + H2O = ADP + phosphate + H(+)</text>
        <dbReference type="Rhea" id="RHEA:13065"/>
        <dbReference type="ChEBI" id="CHEBI:15377"/>
        <dbReference type="ChEBI" id="CHEBI:15378"/>
        <dbReference type="ChEBI" id="CHEBI:30616"/>
        <dbReference type="ChEBI" id="CHEBI:43474"/>
        <dbReference type="ChEBI" id="CHEBI:456216"/>
        <dbReference type="EC" id="3.6.4.13"/>
    </reaction>
</comment>
<comment type="subunit">
    <text evidence="1">Associates with the nuclear pore complex.</text>
</comment>
<comment type="subcellular location">
    <subcellularLocation>
        <location evidence="1">Cytoplasm</location>
    </subcellularLocation>
    <subcellularLocation>
        <location>Nucleus</location>
        <location>Nuclear pore complex</location>
    </subcellularLocation>
    <subcellularLocation>
        <location evidence="1">Nucleus membrane</location>
        <topology evidence="1">Peripheral membrane protein</topology>
        <orientation evidence="1">Cytoplasmic side</orientation>
    </subcellularLocation>
    <text evidence="1">Nuclear pore complex cytoplasmic fibrils.</text>
</comment>
<comment type="domain">
    <text>The Q motif is unique to and characteristic of the DEAD box family of RNA helicases and controls ATP binding and hydrolysis.</text>
</comment>
<comment type="similarity">
    <text evidence="5">Belongs to the DEAD box helicase family. DDX19/DBP5 subfamily.</text>
</comment>
<evidence type="ECO:0000250" key="1"/>
<evidence type="ECO:0000255" key="2">
    <source>
        <dbReference type="PROSITE-ProRule" id="PRU00541"/>
    </source>
</evidence>
<evidence type="ECO:0000255" key="3">
    <source>
        <dbReference type="PROSITE-ProRule" id="PRU00542"/>
    </source>
</evidence>
<evidence type="ECO:0000256" key="4">
    <source>
        <dbReference type="SAM" id="MobiDB-lite"/>
    </source>
</evidence>
<evidence type="ECO:0000305" key="5"/>
<feature type="chain" id="PRO_0000310203" description="ATP-dependent RNA helicase DBP5">
    <location>
        <begin position="1"/>
        <end position="497"/>
    </location>
</feature>
<feature type="domain" description="Helicase ATP-binding" evidence="2">
    <location>
        <begin position="122"/>
        <end position="293"/>
    </location>
</feature>
<feature type="domain" description="Helicase C-terminal" evidence="3">
    <location>
        <begin position="304"/>
        <end position="477"/>
    </location>
</feature>
<feature type="region of interest" description="Disordered" evidence="4">
    <location>
        <begin position="1"/>
        <end position="62"/>
    </location>
</feature>
<feature type="short sequence motif" description="Q motif">
    <location>
        <begin position="89"/>
        <end position="117"/>
    </location>
</feature>
<feature type="short sequence motif" description="DEAD box">
    <location>
        <begin position="240"/>
        <end position="243"/>
    </location>
</feature>
<feature type="compositionally biased region" description="Polar residues" evidence="4">
    <location>
        <begin position="24"/>
        <end position="39"/>
    </location>
</feature>
<feature type="binding site" evidence="2">
    <location>
        <begin position="135"/>
        <end position="142"/>
    </location>
    <ligand>
        <name>ATP</name>
        <dbReference type="ChEBI" id="CHEBI:30616"/>
    </ligand>
</feature>
<reference key="1">
    <citation type="journal article" date="2009" name="Genome Res.">
        <title>Comparative genomic analyses of the human fungal pathogens Coccidioides and their relatives.</title>
        <authorList>
            <person name="Sharpton T.J."/>
            <person name="Stajich J.E."/>
            <person name="Rounsley S.D."/>
            <person name="Gardner M.J."/>
            <person name="Wortman J.R."/>
            <person name="Jordar V.S."/>
            <person name="Maiti R."/>
            <person name="Kodira C.D."/>
            <person name="Neafsey D.E."/>
            <person name="Zeng Q."/>
            <person name="Hung C.-Y."/>
            <person name="McMahan C."/>
            <person name="Muszewska A."/>
            <person name="Grynberg M."/>
            <person name="Mandel M.A."/>
            <person name="Kellner E.M."/>
            <person name="Barker B.M."/>
            <person name="Galgiani J.N."/>
            <person name="Orbach M.J."/>
            <person name="Kirkland T.N."/>
            <person name="Cole G.T."/>
            <person name="Henn M.R."/>
            <person name="Birren B.W."/>
            <person name="Taylor J.W."/>
        </authorList>
    </citation>
    <scope>NUCLEOTIDE SEQUENCE [LARGE SCALE GENOMIC DNA]</scope>
    <source>
        <strain>NAm1 / WU24</strain>
    </source>
</reference>
<keyword id="KW-0067">ATP-binding</keyword>
<keyword id="KW-0963">Cytoplasm</keyword>
<keyword id="KW-0347">Helicase</keyword>
<keyword id="KW-0378">Hydrolase</keyword>
<keyword id="KW-0472">Membrane</keyword>
<keyword id="KW-0509">mRNA transport</keyword>
<keyword id="KW-0906">Nuclear pore complex</keyword>
<keyword id="KW-0547">Nucleotide-binding</keyword>
<keyword id="KW-0539">Nucleus</keyword>
<keyword id="KW-0653">Protein transport</keyword>
<keyword id="KW-1185">Reference proteome</keyword>
<keyword id="KW-0694">RNA-binding</keyword>
<keyword id="KW-0811">Translocation</keyword>
<keyword id="KW-0813">Transport</keyword>
<proteinExistence type="inferred from homology"/>
<name>DBP5_AJECN</name>
<gene>
    <name type="primary">DBP5</name>
    <name type="ORF">HCAG_07208</name>
</gene>
<accession>A6RC50</accession>